<sequence>MAAKIRRDDEVIVLTGKDKGKRGKVKNVLSSGKVIVEGINLVKKHQKPVPALNQPGGIVEKEAAIQVSNVAIFNAATGKADRVGFRFEDGKKVRFFKSNSETIK</sequence>
<name>RL24_ECO24</name>
<comment type="function">
    <text evidence="1">One of two assembly initiator proteins, it binds directly to the 5'-end of the 23S rRNA, where it nucleates assembly of the 50S subunit.</text>
</comment>
<comment type="function">
    <text evidence="1">One of the proteins that surrounds the polypeptide exit tunnel on the outside of the subunit.</text>
</comment>
<comment type="subunit">
    <text evidence="1">Part of the 50S ribosomal subunit.</text>
</comment>
<comment type="similarity">
    <text evidence="1">Belongs to the universal ribosomal protein uL24 family.</text>
</comment>
<evidence type="ECO:0000255" key="1">
    <source>
        <dbReference type="HAMAP-Rule" id="MF_01326"/>
    </source>
</evidence>
<evidence type="ECO:0000305" key="2"/>
<proteinExistence type="inferred from homology"/>
<feature type="chain" id="PRO_1000067579" description="Large ribosomal subunit protein uL24">
    <location>
        <begin position="1"/>
        <end position="104"/>
    </location>
</feature>
<organism>
    <name type="scientific">Escherichia coli O139:H28 (strain E24377A / ETEC)</name>
    <dbReference type="NCBI Taxonomy" id="331111"/>
    <lineage>
        <taxon>Bacteria</taxon>
        <taxon>Pseudomonadati</taxon>
        <taxon>Pseudomonadota</taxon>
        <taxon>Gammaproteobacteria</taxon>
        <taxon>Enterobacterales</taxon>
        <taxon>Enterobacteriaceae</taxon>
        <taxon>Escherichia</taxon>
    </lineage>
</organism>
<protein>
    <recommendedName>
        <fullName evidence="1">Large ribosomal subunit protein uL24</fullName>
    </recommendedName>
    <alternativeName>
        <fullName evidence="2">50S ribosomal protein L24</fullName>
    </alternativeName>
</protein>
<keyword id="KW-1185">Reference proteome</keyword>
<keyword id="KW-0687">Ribonucleoprotein</keyword>
<keyword id="KW-0689">Ribosomal protein</keyword>
<keyword id="KW-0694">RNA-binding</keyword>
<keyword id="KW-0699">rRNA-binding</keyword>
<gene>
    <name evidence="1" type="primary">rplX</name>
    <name type="ordered locus">EcE24377A_3792</name>
</gene>
<reference key="1">
    <citation type="journal article" date="2008" name="J. Bacteriol.">
        <title>The pangenome structure of Escherichia coli: comparative genomic analysis of E. coli commensal and pathogenic isolates.</title>
        <authorList>
            <person name="Rasko D.A."/>
            <person name="Rosovitz M.J."/>
            <person name="Myers G.S.A."/>
            <person name="Mongodin E.F."/>
            <person name="Fricke W.F."/>
            <person name="Gajer P."/>
            <person name="Crabtree J."/>
            <person name="Sebaihia M."/>
            <person name="Thomson N.R."/>
            <person name="Chaudhuri R."/>
            <person name="Henderson I.R."/>
            <person name="Sperandio V."/>
            <person name="Ravel J."/>
        </authorList>
    </citation>
    <scope>NUCLEOTIDE SEQUENCE [LARGE SCALE GENOMIC DNA]</scope>
    <source>
        <strain>E24377A / ETEC</strain>
    </source>
</reference>
<accession>A7ZSJ8</accession>
<dbReference type="EMBL" id="CP000800">
    <property type="protein sequence ID" value="ABV20864.1"/>
    <property type="molecule type" value="Genomic_DNA"/>
</dbReference>
<dbReference type="RefSeq" id="WP_000729185.1">
    <property type="nucleotide sequence ID" value="NC_009801.1"/>
</dbReference>
<dbReference type="SMR" id="A7ZSJ8"/>
<dbReference type="GeneID" id="93778678"/>
<dbReference type="KEGG" id="ecw:EcE24377A_3792"/>
<dbReference type="HOGENOM" id="CLU_093315_2_2_6"/>
<dbReference type="Proteomes" id="UP000001122">
    <property type="component" value="Chromosome"/>
</dbReference>
<dbReference type="GO" id="GO:0005829">
    <property type="term" value="C:cytosol"/>
    <property type="evidence" value="ECO:0007669"/>
    <property type="project" value="UniProtKB-ARBA"/>
</dbReference>
<dbReference type="GO" id="GO:1990904">
    <property type="term" value="C:ribonucleoprotein complex"/>
    <property type="evidence" value="ECO:0007669"/>
    <property type="project" value="UniProtKB-KW"/>
</dbReference>
<dbReference type="GO" id="GO:0005840">
    <property type="term" value="C:ribosome"/>
    <property type="evidence" value="ECO:0007669"/>
    <property type="project" value="UniProtKB-KW"/>
</dbReference>
<dbReference type="GO" id="GO:0019843">
    <property type="term" value="F:rRNA binding"/>
    <property type="evidence" value="ECO:0007669"/>
    <property type="project" value="UniProtKB-UniRule"/>
</dbReference>
<dbReference type="GO" id="GO:0003735">
    <property type="term" value="F:structural constituent of ribosome"/>
    <property type="evidence" value="ECO:0007669"/>
    <property type="project" value="InterPro"/>
</dbReference>
<dbReference type="GO" id="GO:0006412">
    <property type="term" value="P:translation"/>
    <property type="evidence" value="ECO:0007669"/>
    <property type="project" value="UniProtKB-UniRule"/>
</dbReference>
<dbReference type="CDD" id="cd06089">
    <property type="entry name" value="KOW_RPL26"/>
    <property type="match status" value="1"/>
</dbReference>
<dbReference type="FunFam" id="2.30.30.30:FF:000004">
    <property type="entry name" value="50S ribosomal protein L24"/>
    <property type="match status" value="1"/>
</dbReference>
<dbReference type="Gene3D" id="2.30.30.30">
    <property type="match status" value="1"/>
</dbReference>
<dbReference type="HAMAP" id="MF_01326_B">
    <property type="entry name" value="Ribosomal_uL24_B"/>
    <property type="match status" value="1"/>
</dbReference>
<dbReference type="InterPro" id="IPR005824">
    <property type="entry name" value="KOW"/>
</dbReference>
<dbReference type="InterPro" id="IPR014722">
    <property type="entry name" value="Rib_uL2_dom2"/>
</dbReference>
<dbReference type="InterPro" id="IPR003256">
    <property type="entry name" value="Ribosomal_uL24"/>
</dbReference>
<dbReference type="InterPro" id="IPR005825">
    <property type="entry name" value="Ribosomal_uL24_CS"/>
</dbReference>
<dbReference type="InterPro" id="IPR041988">
    <property type="entry name" value="Ribosomal_uL24_KOW"/>
</dbReference>
<dbReference type="InterPro" id="IPR008991">
    <property type="entry name" value="Translation_prot_SH3-like_sf"/>
</dbReference>
<dbReference type="NCBIfam" id="TIGR01079">
    <property type="entry name" value="rplX_bact"/>
    <property type="match status" value="1"/>
</dbReference>
<dbReference type="PANTHER" id="PTHR12903">
    <property type="entry name" value="MITOCHONDRIAL RIBOSOMAL PROTEIN L24"/>
    <property type="match status" value="1"/>
</dbReference>
<dbReference type="Pfam" id="PF00467">
    <property type="entry name" value="KOW"/>
    <property type="match status" value="1"/>
</dbReference>
<dbReference type="Pfam" id="PF17136">
    <property type="entry name" value="ribosomal_L24"/>
    <property type="match status" value="1"/>
</dbReference>
<dbReference type="SMART" id="SM00739">
    <property type="entry name" value="KOW"/>
    <property type="match status" value="1"/>
</dbReference>
<dbReference type="SUPFAM" id="SSF50104">
    <property type="entry name" value="Translation proteins SH3-like domain"/>
    <property type="match status" value="1"/>
</dbReference>
<dbReference type="PROSITE" id="PS01108">
    <property type="entry name" value="RIBOSOMAL_L24"/>
    <property type="match status" value="1"/>
</dbReference>